<feature type="chain" id="PRO_0000155627" description="Putative manganese efflux pump MntP">
    <location>
        <begin position="1"/>
        <end position="182"/>
    </location>
</feature>
<feature type="transmembrane region" description="Helical" evidence="1">
    <location>
        <begin position="6"/>
        <end position="26"/>
    </location>
</feature>
<feature type="transmembrane region" description="Helical" evidence="1">
    <location>
        <begin position="37"/>
        <end position="57"/>
    </location>
</feature>
<feature type="transmembrane region" description="Helical" evidence="1">
    <location>
        <begin position="71"/>
        <end position="91"/>
    </location>
</feature>
<feature type="transmembrane region" description="Helical" evidence="1">
    <location>
        <begin position="101"/>
        <end position="121"/>
    </location>
</feature>
<feature type="transmembrane region" description="Helical" evidence="1">
    <location>
        <begin position="131"/>
        <end position="151"/>
    </location>
</feature>
<feature type="transmembrane region" description="Helical" evidence="1">
    <location>
        <begin position="162"/>
        <end position="182"/>
    </location>
</feature>
<protein>
    <recommendedName>
        <fullName evidence="1">Putative manganese efflux pump MntP</fullName>
    </recommendedName>
</protein>
<gene>
    <name evidence="1" type="primary">mntP</name>
    <name type="ordered locus">BA_5567</name>
    <name type="ordered locus">GBAA_5567</name>
    <name type="ordered locus">BAS5173</name>
</gene>
<dbReference type="EMBL" id="AE016879">
    <property type="protein sequence ID" value="AAP29210.1"/>
    <property type="molecule type" value="Genomic_DNA"/>
</dbReference>
<dbReference type="EMBL" id="AE017334">
    <property type="protein sequence ID" value="AAT34710.1"/>
    <property type="molecule type" value="Genomic_DNA"/>
</dbReference>
<dbReference type="EMBL" id="AE017225">
    <property type="protein sequence ID" value="AAT57462.1"/>
    <property type="molecule type" value="Genomic_DNA"/>
</dbReference>
<dbReference type="RefSeq" id="NP_847724.1">
    <property type="nucleotide sequence ID" value="NC_003997.3"/>
</dbReference>
<dbReference type="RefSeq" id="WP_000142467.1">
    <property type="nucleotide sequence ID" value="NZ_WXXJ01000038.1"/>
</dbReference>
<dbReference type="RefSeq" id="YP_031412.1">
    <property type="nucleotide sequence ID" value="NC_005945.1"/>
</dbReference>
<dbReference type="STRING" id="261594.GBAA_5567"/>
<dbReference type="DNASU" id="1085254"/>
<dbReference type="GeneID" id="45025154"/>
<dbReference type="KEGG" id="ban:BA_5567"/>
<dbReference type="KEGG" id="bar:GBAA_5567"/>
<dbReference type="KEGG" id="bat:BAS5173"/>
<dbReference type="PATRIC" id="fig|198094.11.peg.5526"/>
<dbReference type="eggNOG" id="COG1971">
    <property type="taxonomic scope" value="Bacteria"/>
</dbReference>
<dbReference type="HOGENOM" id="CLU_096410_1_0_9"/>
<dbReference type="OMA" id="WHFGLFQ"/>
<dbReference type="OrthoDB" id="1679700at2"/>
<dbReference type="Proteomes" id="UP000000427">
    <property type="component" value="Chromosome"/>
</dbReference>
<dbReference type="Proteomes" id="UP000000594">
    <property type="component" value="Chromosome"/>
</dbReference>
<dbReference type="GO" id="GO:0005886">
    <property type="term" value="C:plasma membrane"/>
    <property type="evidence" value="ECO:0007669"/>
    <property type="project" value="UniProtKB-SubCell"/>
</dbReference>
<dbReference type="GO" id="GO:0005384">
    <property type="term" value="F:manganese ion transmembrane transporter activity"/>
    <property type="evidence" value="ECO:0007669"/>
    <property type="project" value="UniProtKB-UniRule"/>
</dbReference>
<dbReference type="HAMAP" id="MF_01521">
    <property type="entry name" value="MntP_pump"/>
    <property type="match status" value="1"/>
</dbReference>
<dbReference type="InterPro" id="IPR003810">
    <property type="entry name" value="Mntp/YtaF"/>
</dbReference>
<dbReference type="InterPro" id="IPR022929">
    <property type="entry name" value="Put_MntP"/>
</dbReference>
<dbReference type="PANTHER" id="PTHR35529">
    <property type="entry name" value="MANGANESE EFFLUX PUMP MNTP-RELATED"/>
    <property type="match status" value="1"/>
</dbReference>
<dbReference type="PANTHER" id="PTHR35529:SF1">
    <property type="entry name" value="MANGANESE EFFLUX PUMP MNTP-RELATED"/>
    <property type="match status" value="1"/>
</dbReference>
<dbReference type="Pfam" id="PF02659">
    <property type="entry name" value="Mntp"/>
    <property type="match status" value="1"/>
</dbReference>
<reference key="1">
    <citation type="journal article" date="2003" name="Nature">
        <title>The genome sequence of Bacillus anthracis Ames and comparison to closely related bacteria.</title>
        <authorList>
            <person name="Read T.D."/>
            <person name="Peterson S.N."/>
            <person name="Tourasse N.J."/>
            <person name="Baillie L.W."/>
            <person name="Paulsen I.T."/>
            <person name="Nelson K.E."/>
            <person name="Tettelin H."/>
            <person name="Fouts D.E."/>
            <person name="Eisen J.A."/>
            <person name="Gill S.R."/>
            <person name="Holtzapple E.K."/>
            <person name="Okstad O.A."/>
            <person name="Helgason E."/>
            <person name="Rilstone J."/>
            <person name="Wu M."/>
            <person name="Kolonay J.F."/>
            <person name="Beanan M.J."/>
            <person name="Dodson R.J."/>
            <person name="Brinkac L.M."/>
            <person name="Gwinn M.L."/>
            <person name="DeBoy R.T."/>
            <person name="Madpu R."/>
            <person name="Daugherty S.C."/>
            <person name="Durkin A.S."/>
            <person name="Haft D.H."/>
            <person name="Nelson W.C."/>
            <person name="Peterson J.D."/>
            <person name="Pop M."/>
            <person name="Khouri H.M."/>
            <person name="Radune D."/>
            <person name="Benton J.L."/>
            <person name="Mahamoud Y."/>
            <person name="Jiang L."/>
            <person name="Hance I.R."/>
            <person name="Weidman J.F."/>
            <person name="Berry K.J."/>
            <person name="Plaut R.D."/>
            <person name="Wolf A.M."/>
            <person name="Watkins K.L."/>
            <person name="Nierman W.C."/>
            <person name="Hazen A."/>
            <person name="Cline R.T."/>
            <person name="Redmond C."/>
            <person name="Thwaite J.E."/>
            <person name="White O."/>
            <person name="Salzberg S.L."/>
            <person name="Thomason B."/>
            <person name="Friedlander A.M."/>
            <person name="Koehler T.M."/>
            <person name="Hanna P.C."/>
            <person name="Kolstoe A.-B."/>
            <person name="Fraser C.M."/>
        </authorList>
    </citation>
    <scope>NUCLEOTIDE SEQUENCE [LARGE SCALE GENOMIC DNA]</scope>
    <source>
        <strain>Ames / isolate Porton</strain>
    </source>
</reference>
<reference key="2">
    <citation type="journal article" date="2009" name="J. Bacteriol.">
        <title>The complete genome sequence of Bacillus anthracis Ames 'Ancestor'.</title>
        <authorList>
            <person name="Ravel J."/>
            <person name="Jiang L."/>
            <person name="Stanley S.T."/>
            <person name="Wilson M.R."/>
            <person name="Decker R.S."/>
            <person name="Read T.D."/>
            <person name="Worsham P."/>
            <person name="Keim P.S."/>
            <person name="Salzberg S.L."/>
            <person name="Fraser-Liggett C.M."/>
            <person name="Rasko D.A."/>
        </authorList>
    </citation>
    <scope>NUCLEOTIDE SEQUENCE [LARGE SCALE GENOMIC DNA]</scope>
    <source>
        <strain>Ames ancestor</strain>
    </source>
</reference>
<reference key="3">
    <citation type="submission" date="2004-01" db="EMBL/GenBank/DDBJ databases">
        <title>Complete genome sequence of Bacillus anthracis Sterne.</title>
        <authorList>
            <person name="Brettin T.S."/>
            <person name="Bruce D."/>
            <person name="Challacombe J.F."/>
            <person name="Gilna P."/>
            <person name="Han C."/>
            <person name="Hill K."/>
            <person name="Hitchcock P."/>
            <person name="Jackson P."/>
            <person name="Keim P."/>
            <person name="Longmire J."/>
            <person name="Lucas S."/>
            <person name="Okinaka R."/>
            <person name="Richardson P."/>
            <person name="Rubin E."/>
            <person name="Tice H."/>
        </authorList>
    </citation>
    <scope>NUCLEOTIDE SEQUENCE [LARGE SCALE GENOMIC DNA]</scope>
    <source>
        <strain>Sterne</strain>
    </source>
</reference>
<evidence type="ECO:0000255" key="1">
    <source>
        <dbReference type="HAMAP-Rule" id="MF_01521"/>
    </source>
</evidence>
<name>MNTP_BACAN</name>
<organism>
    <name type="scientific">Bacillus anthracis</name>
    <dbReference type="NCBI Taxonomy" id="1392"/>
    <lineage>
        <taxon>Bacteria</taxon>
        <taxon>Bacillati</taxon>
        <taxon>Bacillota</taxon>
        <taxon>Bacilli</taxon>
        <taxon>Bacillales</taxon>
        <taxon>Bacillaceae</taxon>
        <taxon>Bacillus</taxon>
        <taxon>Bacillus cereus group</taxon>
    </lineage>
</organism>
<sequence length="182" mass="19658">MTFEQLIPLIIMAFALGMDAFSVSLGMGMMALKIRQILYIGVTIGIFHIIMPFIGMVLGRFLSEQYGDIAHFAGAILLIGLGFYIVYSSILENEETRTAPIGISLFVFAFGVSIDSFSVGLSLGIYGAQTIITILLFGFVSMLLAWIGLLIGRHAKGMLGTYGEIVGGIILVGFGLYLLFPI</sequence>
<comment type="function">
    <text evidence="1">Probably functions as a manganese efflux pump.</text>
</comment>
<comment type="subcellular location">
    <subcellularLocation>
        <location evidence="1">Cell membrane</location>
        <topology evidence="1">Multi-pass membrane protein</topology>
    </subcellularLocation>
</comment>
<comment type="similarity">
    <text evidence="1">Belongs to the MntP (TC 9.B.29) family.</text>
</comment>
<accession>Q81JX6</accession>
<accession>Q6HQH6</accession>
<accession>Q6KJV0</accession>
<proteinExistence type="inferred from homology"/>
<keyword id="KW-1003">Cell membrane</keyword>
<keyword id="KW-0406">Ion transport</keyword>
<keyword id="KW-0464">Manganese</keyword>
<keyword id="KW-0472">Membrane</keyword>
<keyword id="KW-1185">Reference proteome</keyword>
<keyword id="KW-0812">Transmembrane</keyword>
<keyword id="KW-1133">Transmembrane helix</keyword>
<keyword id="KW-0813">Transport</keyword>